<evidence type="ECO:0000250" key="1"/>
<evidence type="ECO:0000250" key="2">
    <source>
        <dbReference type="UniProtKB" id="P03928"/>
    </source>
</evidence>
<evidence type="ECO:0000250" key="3">
    <source>
        <dbReference type="UniProtKB" id="P03930"/>
    </source>
</evidence>
<evidence type="ECO:0000255" key="4"/>
<evidence type="ECO:0000305" key="5"/>
<proteinExistence type="inferred from homology"/>
<feature type="chain" id="PRO_0000247811" description="ATP synthase protein 8">
    <location>
        <begin position="1"/>
        <end position="67"/>
    </location>
</feature>
<feature type="transmembrane region" description="Helical" evidence="4">
    <location>
        <begin position="8"/>
        <end position="24"/>
    </location>
</feature>
<feature type="modified residue" description="N6-acetyllysine; alternate" evidence="3">
    <location>
        <position position="54"/>
    </location>
</feature>
<feature type="modified residue" description="N6-succinyllysine; alternate" evidence="3">
    <location>
        <position position="54"/>
    </location>
</feature>
<feature type="modified residue" description="N6-acetyllysine" evidence="3">
    <location>
        <position position="57"/>
    </location>
</feature>
<name>ATP8_FELSL</name>
<protein>
    <recommendedName>
        <fullName>ATP synthase protein 8</fullName>
    </recommendedName>
    <alternativeName>
        <fullName>A6L</fullName>
    </alternativeName>
    <alternativeName>
        <fullName>F-ATPase subunit 8</fullName>
    </alternativeName>
</protein>
<organism>
    <name type="scientific">Felis silvestris lybica</name>
    <name type="common">African wildcat</name>
    <name type="synonym">Felis lybica</name>
    <dbReference type="NCBI Taxonomy" id="61377"/>
    <lineage>
        <taxon>Eukaryota</taxon>
        <taxon>Metazoa</taxon>
        <taxon>Chordata</taxon>
        <taxon>Craniata</taxon>
        <taxon>Vertebrata</taxon>
        <taxon>Euteleostomi</taxon>
        <taxon>Mammalia</taxon>
        <taxon>Eutheria</taxon>
        <taxon>Laurasiatheria</taxon>
        <taxon>Carnivora</taxon>
        <taxon>Feliformia</taxon>
        <taxon>Felidae</taxon>
        <taxon>Felinae</taxon>
        <taxon>Felis</taxon>
    </lineage>
</organism>
<sequence>MPQLDTSTWSITIMSMIMTLFIVFQLKISKYLYPSNPEPKSMTTLKQLNPWEKKWTKIYSPLSLPQQ</sequence>
<accession>Q94NW9</accession>
<reference key="1">
    <citation type="journal article" date="2001" name="Mol. Biol. Evol.">
        <title>Genetic identification of wild and domestic cats (Felis silvestris) and their hybrids using Bayesian clustering methods.</title>
        <authorList>
            <person name="Randi E."/>
            <person name="Pierpaoli M."/>
            <person name="Beaumont M."/>
            <person name="Ragni B."/>
            <person name="Sforzi A."/>
        </authorList>
    </citation>
    <scope>NUCLEOTIDE SEQUENCE [GENOMIC DNA]</scope>
</reference>
<keyword id="KW-0007">Acetylation</keyword>
<keyword id="KW-0066">ATP synthesis</keyword>
<keyword id="KW-0138">CF(0)</keyword>
<keyword id="KW-0375">Hydrogen ion transport</keyword>
<keyword id="KW-0406">Ion transport</keyword>
<keyword id="KW-0472">Membrane</keyword>
<keyword id="KW-0496">Mitochondrion</keyword>
<keyword id="KW-0812">Transmembrane</keyword>
<keyword id="KW-1133">Transmembrane helix</keyword>
<keyword id="KW-0813">Transport</keyword>
<gene>
    <name type="primary">MT-ATP8</name>
    <name type="synonym">ATP8</name>
    <name type="synonym">ATPASE8</name>
    <name type="synonym">MTATP8</name>
</gene>
<geneLocation type="mitochondrion"/>
<dbReference type="EMBL" id="AJ409135">
    <property type="protein sequence ID" value="CAC41049.1"/>
    <property type="molecule type" value="Genomic_DNA"/>
</dbReference>
<dbReference type="EMBL" id="AJ409140">
    <property type="protein sequence ID" value="CAC41064.1"/>
    <property type="molecule type" value="Genomic_DNA"/>
</dbReference>
<dbReference type="EMBL" id="AJ409142">
    <property type="protein sequence ID" value="CAC41070.1"/>
    <property type="molecule type" value="Genomic_DNA"/>
</dbReference>
<dbReference type="EMBL" id="AJ409144">
    <property type="protein sequence ID" value="CAC41076.1"/>
    <property type="molecule type" value="Genomic_DNA"/>
</dbReference>
<dbReference type="SMR" id="Q94NW9"/>
<dbReference type="GO" id="GO:0031966">
    <property type="term" value="C:mitochondrial membrane"/>
    <property type="evidence" value="ECO:0007669"/>
    <property type="project" value="UniProtKB-SubCell"/>
</dbReference>
<dbReference type="GO" id="GO:0045259">
    <property type="term" value="C:proton-transporting ATP synthase complex"/>
    <property type="evidence" value="ECO:0000250"/>
    <property type="project" value="UniProtKB"/>
</dbReference>
<dbReference type="GO" id="GO:0015078">
    <property type="term" value="F:proton transmembrane transporter activity"/>
    <property type="evidence" value="ECO:0007669"/>
    <property type="project" value="InterPro"/>
</dbReference>
<dbReference type="GO" id="GO:0015986">
    <property type="term" value="P:proton motive force-driven ATP synthesis"/>
    <property type="evidence" value="ECO:0007669"/>
    <property type="project" value="InterPro"/>
</dbReference>
<dbReference type="InterPro" id="IPR039017">
    <property type="entry name" value="ATP8_mammal"/>
</dbReference>
<dbReference type="InterPro" id="IPR001421">
    <property type="entry name" value="ATP8_metazoa"/>
</dbReference>
<dbReference type="PANTHER" id="PTHR13722">
    <property type="entry name" value="ATP SYNTHASE PROTEIN 8"/>
    <property type="match status" value="1"/>
</dbReference>
<dbReference type="PANTHER" id="PTHR13722:SF0">
    <property type="entry name" value="ATP SYNTHASE PROTEIN 8"/>
    <property type="match status" value="1"/>
</dbReference>
<dbReference type="Pfam" id="PF00895">
    <property type="entry name" value="ATP-synt_8"/>
    <property type="match status" value="1"/>
</dbReference>
<comment type="function">
    <text evidence="1">Mitochondrial membrane ATP synthase (F(1)F(0) ATP synthase or Complex V) produces ATP from ADP in the presence of a proton gradient across the membrane which is generated by electron transport complexes of the respiratory chain. F-type ATPases consist of two structural domains, F(1) - containing the extramembraneous catalytic core and F(0) - containing the membrane proton channel, linked together by a central stalk and a peripheral stalk. During catalysis, ATP synthesis in the catalytic domain of F(1) is coupled via a rotary mechanism of the central stalk subunits to proton translocation. Part of the complex F(0) domain. Minor subunit located with subunit a in the membrane (By similarity).</text>
</comment>
<comment type="subunit">
    <text evidence="2">F-type ATPases have 2 components, CF(1) - the catalytic core - and CF(0) - the membrane proton channel. Component of an ATP synthase complex composed of ATP5PB, ATP5MC1, ATP5F1E, ATP5PD, ATP5ME, ATP5PF, ATP5MF, MT-ATP6, MT-ATP8, ATP5F1A, ATP5F1B, ATP5F1D, ATP5F1C, ATP5PO, ATP5MG, ATP5MK and ATP5MJ (By similarity). Interacts with PRICKLE3 (By similarity).</text>
</comment>
<comment type="subcellular location">
    <subcellularLocation>
        <location>Mitochondrion membrane</location>
        <topology>Single-pass membrane protein</topology>
    </subcellularLocation>
</comment>
<comment type="similarity">
    <text evidence="5">Belongs to the ATPase protein 8 family.</text>
</comment>